<dbReference type="EMBL" id="BX571865">
    <property type="protein sequence ID" value="CAE14215.1"/>
    <property type="molecule type" value="Genomic_DNA"/>
</dbReference>
<dbReference type="RefSeq" id="WP_011146184.1">
    <property type="nucleotide sequence ID" value="NC_005126.1"/>
</dbReference>
<dbReference type="SMR" id="Q7N5M6"/>
<dbReference type="STRING" id="243265.plu1922"/>
<dbReference type="GeneID" id="48848194"/>
<dbReference type="KEGG" id="plu:plu1922"/>
<dbReference type="eggNOG" id="COG1706">
    <property type="taxonomic scope" value="Bacteria"/>
</dbReference>
<dbReference type="HOGENOM" id="CLU_045235_1_0_6"/>
<dbReference type="OrthoDB" id="9786431at2"/>
<dbReference type="Proteomes" id="UP000002514">
    <property type="component" value="Chromosome"/>
</dbReference>
<dbReference type="GO" id="GO:0009428">
    <property type="term" value="C:bacterial-type flagellum basal body, distal rod, P ring"/>
    <property type="evidence" value="ECO:0007669"/>
    <property type="project" value="InterPro"/>
</dbReference>
<dbReference type="GO" id="GO:0030288">
    <property type="term" value="C:outer membrane-bounded periplasmic space"/>
    <property type="evidence" value="ECO:0007669"/>
    <property type="project" value="InterPro"/>
</dbReference>
<dbReference type="GO" id="GO:0005198">
    <property type="term" value="F:structural molecule activity"/>
    <property type="evidence" value="ECO:0007669"/>
    <property type="project" value="InterPro"/>
</dbReference>
<dbReference type="GO" id="GO:0071973">
    <property type="term" value="P:bacterial-type flagellum-dependent cell motility"/>
    <property type="evidence" value="ECO:0007669"/>
    <property type="project" value="InterPro"/>
</dbReference>
<dbReference type="HAMAP" id="MF_00416">
    <property type="entry name" value="FlgI"/>
    <property type="match status" value="1"/>
</dbReference>
<dbReference type="InterPro" id="IPR001782">
    <property type="entry name" value="Flag_FlgI"/>
</dbReference>
<dbReference type="NCBIfam" id="NF003676">
    <property type="entry name" value="PRK05303.1"/>
    <property type="match status" value="1"/>
</dbReference>
<dbReference type="PANTHER" id="PTHR30381">
    <property type="entry name" value="FLAGELLAR P-RING PERIPLASMIC PROTEIN FLGI"/>
    <property type="match status" value="1"/>
</dbReference>
<dbReference type="PANTHER" id="PTHR30381:SF0">
    <property type="entry name" value="FLAGELLAR P-RING PROTEIN"/>
    <property type="match status" value="1"/>
</dbReference>
<dbReference type="Pfam" id="PF02119">
    <property type="entry name" value="FlgI"/>
    <property type="match status" value="1"/>
</dbReference>
<dbReference type="PRINTS" id="PR01010">
    <property type="entry name" value="FLGPRINGFLGI"/>
</dbReference>
<proteinExistence type="inferred from homology"/>
<name>FLGI_PHOLL</name>
<feature type="signal peptide" evidence="1">
    <location>
        <begin position="1"/>
        <end position="23"/>
    </location>
</feature>
<feature type="chain" id="PRO_0000009511" description="Flagellar P-ring protein">
    <location>
        <begin position="24"/>
        <end position="369"/>
    </location>
</feature>
<accession>Q7N5M6</accession>
<sequence length="369" mass="38418">MIKQFAVSLLLVLLTLVTTTASAERIRDLTTVQGVRENALIGYGLVVGLDGTGDQTTQTPFTTQSLSNMLSQLGITVPPGTNMQLKNVAAVMVTAKLPPFGRAGQNIDVVVSSLGNAKSLRGGTLLMTPLKGVDNQVYALAQGNILVGGAGASAGGSSVKVNQLAGGRISNGAVIERELPTQFGENGVLNLQLNNEDFSLAQQISDTINRTDGTGTATPLDARTVQLRMPRDKSAQVKFLSHVQNLTVRVDVGDAKVIVNSRTGSVVMNRNVMLDSCAVAQGNLSVIVDNQVVVSQPNTPLAGGSTVVTRNPAVAVREQNGALQQVNASASLSQVIQALNALGATPNDLMSILQAMESAGCLRAKLEII</sequence>
<reference key="1">
    <citation type="journal article" date="2003" name="Nat. Biotechnol.">
        <title>The genome sequence of the entomopathogenic bacterium Photorhabdus luminescens.</title>
        <authorList>
            <person name="Duchaud E."/>
            <person name="Rusniok C."/>
            <person name="Frangeul L."/>
            <person name="Buchrieser C."/>
            <person name="Givaudan A."/>
            <person name="Taourit S."/>
            <person name="Bocs S."/>
            <person name="Boursaux-Eude C."/>
            <person name="Chandler M."/>
            <person name="Charles J.-F."/>
            <person name="Dassa E."/>
            <person name="Derose R."/>
            <person name="Derzelle S."/>
            <person name="Freyssinet G."/>
            <person name="Gaudriault S."/>
            <person name="Medigue C."/>
            <person name="Lanois A."/>
            <person name="Powell K."/>
            <person name="Siguier P."/>
            <person name="Vincent R."/>
            <person name="Wingate V."/>
            <person name="Zouine M."/>
            <person name="Glaser P."/>
            <person name="Boemare N."/>
            <person name="Danchin A."/>
            <person name="Kunst F."/>
        </authorList>
    </citation>
    <scope>NUCLEOTIDE SEQUENCE [LARGE SCALE GENOMIC DNA]</scope>
    <source>
        <strain>DSM 15139 / CIP 105565 / TT01</strain>
    </source>
</reference>
<gene>
    <name evidence="1" type="primary">flgI</name>
    <name type="ordered locus">plu1922</name>
</gene>
<organism>
    <name type="scientific">Photorhabdus laumondii subsp. laumondii (strain DSM 15139 / CIP 105565 / TT01)</name>
    <name type="common">Photorhabdus luminescens subsp. laumondii</name>
    <dbReference type="NCBI Taxonomy" id="243265"/>
    <lineage>
        <taxon>Bacteria</taxon>
        <taxon>Pseudomonadati</taxon>
        <taxon>Pseudomonadota</taxon>
        <taxon>Gammaproteobacteria</taxon>
        <taxon>Enterobacterales</taxon>
        <taxon>Morganellaceae</taxon>
        <taxon>Photorhabdus</taxon>
    </lineage>
</organism>
<protein>
    <recommendedName>
        <fullName evidence="1">Flagellar P-ring protein</fullName>
    </recommendedName>
    <alternativeName>
        <fullName evidence="1">Basal body P-ring protein</fullName>
    </alternativeName>
</protein>
<keyword id="KW-0975">Bacterial flagellum</keyword>
<keyword id="KW-0574">Periplasm</keyword>
<keyword id="KW-1185">Reference proteome</keyword>
<keyword id="KW-0732">Signal</keyword>
<comment type="function">
    <text evidence="1">Assembles around the rod to form the L-ring and probably protects the motor/basal body from shearing forces during rotation.</text>
</comment>
<comment type="subunit">
    <text evidence="1">The basal body constitutes a major portion of the flagellar organelle and consists of four rings (L,P,S, and M) mounted on a central rod.</text>
</comment>
<comment type="subcellular location">
    <subcellularLocation>
        <location evidence="1">Periplasm</location>
    </subcellularLocation>
    <subcellularLocation>
        <location evidence="1">Bacterial flagellum basal body</location>
    </subcellularLocation>
</comment>
<comment type="similarity">
    <text evidence="1">Belongs to the FlgI family.</text>
</comment>
<evidence type="ECO:0000255" key="1">
    <source>
        <dbReference type="HAMAP-Rule" id="MF_00416"/>
    </source>
</evidence>